<evidence type="ECO:0000250" key="1">
    <source>
        <dbReference type="UniProtKB" id="Q9NQ40"/>
    </source>
</evidence>
<evidence type="ECO:0000255" key="2"/>
<evidence type="ECO:0000256" key="3">
    <source>
        <dbReference type="SAM" id="MobiDB-lite"/>
    </source>
</evidence>
<evidence type="ECO:0000305" key="4"/>
<keyword id="KW-1003">Cell membrane</keyword>
<keyword id="KW-0325">Glycoprotein</keyword>
<keyword id="KW-0472">Membrane</keyword>
<keyword id="KW-1185">Reference proteome</keyword>
<keyword id="KW-0812">Transmembrane</keyword>
<keyword id="KW-1133">Transmembrane helix</keyword>
<keyword id="KW-0813">Transport</keyword>
<proteinExistence type="evidence at transcript level"/>
<reference key="1">
    <citation type="journal article" date="2010" name="BMC Genomics">
        <title>Salmo salar and Esox lucius full-length cDNA sequences reveal changes in evolutionary pressures on a post-tetraploidization genome.</title>
        <authorList>
            <person name="Leong J.S."/>
            <person name="Jantzen S.G."/>
            <person name="von Schalburg K.R."/>
            <person name="Cooper G.A."/>
            <person name="Messmer A.M."/>
            <person name="Liao N.Y."/>
            <person name="Munro S."/>
            <person name="Moore R."/>
            <person name="Holt R.A."/>
            <person name="Jones S.J."/>
            <person name="Davidson W.S."/>
            <person name="Koop B.F."/>
        </authorList>
    </citation>
    <scope>NUCLEOTIDE SEQUENCE [LARGE SCALE MRNA]</scope>
    <source>
        <tissue>Brain</tissue>
    </source>
</reference>
<feature type="chain" id="PRO_0000399796" description="Riboflavin transporter 2">
    <location>
        <begin position="1"/>
        <end position="458"/>
    </location>
</feature>
<feature type="transmembrane region" description="Helical" evidence="2">
    <location>
        <begin position="11"/>
        <end position="31"/>
    </location>
</feature>
<feature type="transmembrane region" description="Helical" evidence="2">
    <location>
        <begin position="38"/>
        <end position="58"/>
    </location>
</feature>
<feature type="transmembrane region" description="Helical" evidence="2">
    <location>
        <begin position="73"/>
        <end position="93"/>
    </location>
</feature>
<feature type="transmembrane region" description="Helical" evidence="2">
    <location>
        <begin position="97"/>
        <end position="117"/>
    </location>
</feature>
<feature type="transmembrane region" description="Helical" evidence="2">
    <location>
        <begin position="146"/>
        <end position="166"/>
    </location>
</feature>
<feature type="transmembrane region" description="Helical" evidence="2">
    <location>
        <begin position="204"/>
        <end position="224"/>
    </location>
</feature>
<feature type="transmembrane region" description="Helical" evidence="2">
    <location>
        <begin position="279"/>
        <end position="299"/>
    </location>
</feature>
<feature type="transmembrane region" description="Helical" evidence="2">
    <location>
        <begin position="325"/>
        <end position="345"/>
    </location>
</feature>
<feature type="transmembrane region" description="Helical" evidence="2">
    <location>
        <begin position="349"/>
        <end position="369"/>
    </location>
</feature>
<feature type="transmembrane region" description="Helical" evidence="2">
    <location>
        <begin position="388"/>
        <end position="408"/>
    </location>
</feature>
<feature type="transmembrane region" description="Helical" evidence="2">
    <location>
        <begin position="417"/>
        <end position="437"/>
    </location>
</feature>
<feature type="region of interest" description="Disordered" evidence="3">
    <location>
        <begin position="249"/>
        <end position="274"/>
    </location>
</feature>
<feature type="glycosylation site" description="N-linked (GlcNAc...) asparagine" evidence="2">
    <location>
        <position position="168"/>
    </location>
</feature>
<feature type="glycosylation site" description="N-linked (GlcNAc...) asparagine" evidence="2">
    <location>
        <position position="176"/>
    </location>
</feature>
<feature type="glycosylation site" description="N-linked (GlcNAc...) asparagine" evidence="2">
    <location>
        <position position="182"/>
    </location>
</feature>
<feature type="glycosylation site" description="N-linked (GlcNAc...) asparagine" evidence="2">
    <location>
        <position position="199"/>
    </location>
</feature>
<name>RFT2_SALSA</name>
<sequence length="458" mass="49216">MTLLTHVLACLFGMGSWVAINGIWVELPLIVPEIPEGWYLPSYLTVLIQMANVGPLFVTLMHRFRPGKLDERPVIYSIVGLGVVATFLLAFFWKHTVPLAGATHSVPLLVLCFLLSVVDCTSSVTFLPFMMRLGPQYLTTYFVGEGVSGLVPAVVALVQGVGVVHCRNATVASLANGTLGVNSTVGASGELQAQYQPANFSAQVFFLFLSAMMVVCLAAFLLLNHHPAVAREKKCEQYFNGGLAEEKSDQALSLSHRPQEEKPMISSPDSHRRARQSSFGTGFYSGPELAFIFVVLAWVNALTNAVLPSVQSYSCLPYGNQAYHLAATMAAVANPVACFIAMFLPLRSLVLIGLLTIVGTGFGTYIMAMATLSPCPLLVHSASGTTLIVIAWVLFVLTLSYVKVIIGVILRDEGHSALVWCGAVVQLGSMLGALSMFPLVSVYGLFKSGDPCNTKCTK</sequence>
<dbReference type="EMBL" id="BT045947">
    <property type="protein sequence ID" value="ACI34209.1"/>
    <property type="molecule type" value="mRNA"/>
</dbReference>
<dbReference type="RefSeq" id="NP_001133955.1">
    <property type="nucleotide sequence ID" value="NM_001140483.1"/>
</dbReference>
<dbReference type="RefSeq" id="XP_014019161.1">
    <property type="nucleotide sequence ID" value="XM_014163686.1"/>
</dbReference>
<dbReference type="RefSeq" id="XP_014019169.1">
    <property type="nucleotide sequence ID" value="XM_014163694.1"/>
</dbReference>
<dbReference type="RefSeq" id="XP_014019182.1">
    <property type="nucleotide sequence ID" value="XM_014163707.1"/>
</dbReference>
<dbReference type="SMR" id="B5X4H8"/>
<dbReference type="STRING" id="8030.ENSSSAP00000107332"/>
<dbReference type="GlyCosmos" id="B5X4H8">
    <property type="glycosylation" value="4 sites, No reported glycans"/>
</dbReference>
<dbReference type="PaxDb" id="8030-ENSSSAP00000107332"/>
<dbReference type="Ensembl" id="ENSSSAT00000142134">
    <property type="protein sequence ID" value="ENSSSAP00000107332"/>
    <property type="gene ID" value="ENSSSAG00000076975"/>
</dbReference>
<dbReference type="Ensembl" id="ENSSSAT00020012089">
    <property type="protein sequence ID" value="ENSSSAP00020011228"/>
    <property type="gene ID" value="ENSSSAG00020004403"/>
</dbReference>
<dbReference type="Ensembl" id="ENSSSAT00070059900">
    <property type="protein sequence ID" value="ENSSSAP00070057420"/>
    <property type="gene ID" value="ENSSSAG00070037333"/>
</dbReference>
<dbReference type="Ensembl" id="ENSSSAT00075011868">
    <property type="protein sequence ID" value="ENSSSAP00075008127"/>
    <property type="gene ID" value="ENSSSAG00075005688"/>
</dbReference>
<dbReference type="GeneID" id="100195454"/>
<dbReference type="KEGG" id="sasa:100195454"/>
<dbReference type="CTD" id="100195454"/>
<dbReference type="OMA" id="FMAMFLH"/>
<dbReference type="OrthoDB" id="149090at7898"/>
<dbReference type="Proteomes" id="UP000087266">
    <property type="component" value="Chromosome ssa02"/>
</dbReference>
<dbReference type="GO" id="GO:0005886">
    <property type="term" value="C:plasma membrane"/>
    <property type="evidence" value="ECO:0007669"/>
    <property type="project" value="UniProtKB-SubCell"/>
</dbReference>
<dbReference type="GO" id="GO:0032217">
    <property type="term" value="F:riboflavin transmembrane transporter activity"/>
    <property type="evidence" value="ECO:0007669"/>
    <property type="project" value="InterPro"/>
</dbReference>
<dbReference type="InterPro" id="IPR009357">
    <property type="entry name" value="Riboflavin_transptr"/>
</dbReference>
<dbReference type="PANTHER" id="PTHR12929">
    <property type="entry name" value="SOLUTE CARRIER FAMILY 52"/>
    <property type="match status" value="1"/>
</dbReference>
<dbReference type="PANTHER" id="PTHR12929:SF6">
    <property type="entry name" value="SOLUTE CARRIER FAMILY 52, RIBOFLAVIN TRANSPORTER, MEMBER 3-B"/>
    <property type="match status" value="1"/>
</dbReference>
<dbReference type="Pfam" id="PF06237">
    <property type="entry name" value="SLC52_ribofla_tr"/>
    <property type="match status" value="1"/>
</dbReference>
<gene>
    <name type="primary">rft2</name>
</gene>
<organism>
    <name type="scientific">Salmo salar</name>
    <name type="common">Atlantic salmon</name>
    <dbReference type="NCBI Taxonomy" id="8030"/>
    <lineage>
        <taxon>Eukaryota</taxon>
        <taxon>Metazoa</taxon>
        <taxon>Chordata</taxon>
        <taxon>Craniata</taxon>
        <taxon>Vertebrata</taxon>
        <taxon>Euteleostomi</taxon>
        <taxon>Actinopterygii</taxon>
        <taxon>Neopterygii</taxon>
        <taxon>Teleostei</taxon>
        <taxon>Protacanthopterygii</taxon>
        <taxon>Salmoniformes</taxon>
        <taxon>Salmonidae</taxon>
        <taxon>Salmoninae</taxon>
        <taxon>Salmo</taxon>
    </lineage>
</organism>
<accession>B5X4H8</accession>
<protein>
    <recommendedName>
        <fullName>Riboflavin transporter 2</fullName>
        <shortName>RFT2</shortName>
    </recommendedName>
</protein>
<comment type="function">
    <text evidence="1">Plasma membrane transporter mediating the uptake by cells of the water soluble vitamin B2/riboflavin that plays a key role in biochemical oxidation-reduction reactions of the carbohydrate, lipid, and amino acid metabolism.</text>
</comment>
<comment type="catalytic activity">
    <reaction evidence="1">
        <text>riboflavin(in) = riboflavin(out)</text>
        <dbReference type="Rhea" id="RHEA:35015"/>
        <dbReference type="ChEBI" id="CHEBI:57986"/>
    </reaction>
</comment>
<comment type="subcellular location">
    <subcellularLocation>
        <location evidence="1">Cell membrane</location>
        <topology evidence="2">Multi-pass membrane protein</topology>
    </subcellularLocation>
</comment>
<comment type="similarity">
    <text evidence="4">Belongs to the riboflavin transporter family.</text>
</comment>